<proteinExistence type="inferred from homology"/>
<gene>
    <name evidence="1" type="primary">argP</name>
    <name type="synonym">iciA</name>
    <name type="ordered locus">PA4363</name>
</gene>
<name>ARGP_PSEAE</name>
<comment type="function">
    <text evidence="1">Controls the transcription of genes involved in arginine and lysine metabolism.</text>
</comment>
<comment type="subunit">
    <text evidence="1">Homodimer.</text>
</comment>
<comment type="similarity">
    <text evidence="2">Belongs to the LysR transcriptional regulatory family.</text>
</comment>
<dbReference type="EMBL" id="AE004091">
    <property type="protein sequence ID" value="AAG07751.1"/>
    <property type="molecule type" value="Genomic_DNA"/>
</dbReference>
<dbReference type="PIR" id="B83100">
    <property type="entry name" value="B83100"/>
</dbReference>
<dbReference type="RefSeq" id="NP_253053.1">
    <property type="nucleotide sequence ID" value="NC_002516.2"/>
</dbReference>
<dbReference type="RefSeq" id="WP_003120877.1">
    <property type="nucleotide sequence ID" value="NZ_QZGE01000004.1"/>
</dbReference>
<dbReference type="SMR" id="Q9HW38"/>
<dbReference type="FunCoup" id="Q9HW38">
    <property type="interactions" value="129"/>
</dbReference>
<dbReference type="STRING" id="208964.PA4363"/>
<dbReference type="PaxDb" id="208964-PA4363"/>
<dbReference type="GeneID" id="881413"/>
<dbReference type="KEGG" id="pae:PA4363"/>
<dbReference type="PATRIC" id="fig|208964.12.peg.4570"/>
<dbReference type="PseudoCAP" id="PA4363"/>
<dbReference type="HOGENOM" id="CLU_063829_0_0_6"/>
<dbReference type="InParanoid" id="Q9HW38"/>
<dbReference type="OrthoDB" id="3252676at2"/>
<dbReference type="PhylomeDB" id="Q9HW38"/>
<dbReference type="BioCyc" id="PAER208964:G1FZ6-4449-MONOMER"/>
<dbReference type="Proteomes" id="UP000002438">
    <property type="component" value="Chromosome"/>
</dbReference>
<dbReference type="GO" id="GO:0003700">
    <property type="term" value="F:DNA-binding transcription factor activity"/>
    <property type="evidence" value="ECO:0000318"/>
    <property type="project" value="GO_Central"/>
</dbReference>
<dbReference type="GO" id="GO:0043565">
    <property type="term" value="F:sequence-specific DNA binding"/>
    <property type="evidence" value="ECO:0000314"/>
    <property type="project" value="PseudoCAP"/>
</dbReference>
<dbReference type="GO" id="GO:0006355">
    <property type="term" value="P:regulation of DNA-templated transcription"/>
    <property type="evidence" value="ECO:0000318"/>
    <property type="project" value="GO_Central"/>
</dbReference>
<dbReference type="FunFam" id="1.10.10.10:FF:000061">
    <property type="entry name" value="HTH-type transcriptional regulator ArgP"/>
    <property type="match status" value="1"/>
</dbReference>
<dbReference type="Gene3D" id="3.40.190.290">
    <property type="match status" value="1"/>
</dbReference>
<dbReference type="Gene3D" id="1.10.10.10">
    <property type="entry name" value="Winged helix-like DNA-binding domain superfamily/Winged helix DNA-binding domain"/>
    <property type="match status" value="1"/>
</dbReference>
<dbReference type="HAMAP" id="MF_00513">
    <property type="entry name" value="HTH_type_ArgP"/>
    <property type="match status" value="1"/>
</dbReference>
<dbReference type="InterPro" id="IPR017685">
    <property type="entry name" value="ArgP"/>
</dbReference>
<dbReference type="InterPro" id="IPR023490">
    <property type="entry name" value="ArgP_gammaproteobact"/>
</dbReference>
<dbReference type="InterPro" id="IPR050176">
    <property type="entry name" value="LTTR"/>
</dbReference>
<dbReference type="InterPro" id="IPR005119">
    <property type="entry name" value="LysR_subst-bd"/>
</dbReference>
<dbReference type="InterPro" id="IPR000847">
    <property type="entry name" value="Tscrpt_reg_HTH_LysR"/>
</dbReference>
<dbReference type="InterPro" id="IPR036388">
    <property type="entry name" value="WH-like_DNA-bd_sf"/>
</dbReference>
<dbReference type="InterPro" id="IPR036390">
    <property type="entry name" value="WH_DNA-bd_sf"/>
</dbReference>
<dbReference type="NCBIfam" id="TIGR03298">
    <property type="entry name" value="argP"/>
    <property type="match status" value="1"/>
</dbReference>
<dbReference type="NCBIfam" id="NF002964">
    <property type="entry name" value="PRK03635.1"/>
    <property type="match status" value="1"/>
</dbReference>
<dbReference type="NCBIfam" id="NF009888">
    <property type="entry name" value="PRK13348.1"/>
    <property type="match status" value="1"/>
</dbReference>
<dbReference type="PANTHER" id="PTHR30579:SF2">
    <property type="entry name" value="HTH-TYPE TRANSCRIPTIONAL REGULATOR ARGP"/>
    <property type="match status" value="1"/>
</dbReference>
<dbReference type="PANTHER" id="PTHR30579">
    <property type="entry name" value="TRANSCRIPTIONAL REGULATOR"/>
    <property type="match status" value="1"/>
</dbReference>
<dbReference type="Pfam" id="PF00126">
    <property type="entry name" value="HTH_1"/>
    <property type="match status" value="1"/>
</dbReference>
<dbReference type="Pfam" id="PF03466">
    <property type="entry name" value="LysR_substrate"/>
    <property type="match status" value="1"/>
</dbReference>
<dbReference type="PRINTS" id="PR00039">
    <property type="entry name" value="HTHLYSR"/>
</dbReference>
<dbReference type="SUPFAM" id="SSF53850">
    <property type="entry name" value="Periplasmic binding protein-like II"/>
    <property type="match status" value="1"/>
</dbReference>
<dbReference type="SUPFAM" id="SSF46785">
    <property type="entry name" value="Winged helix' DNA-binding domain"/>
    <property type="match status" value="1"/>
</dbReference>
<dbReference type="PROSITE" id="PS50931">
    <property type="entry name" value="HTH_LYSR"/>
    <property type="match status" value="1"/>
</dbReference>
<organism>
    <name type="scientific">Pseudomonas aeruginosa (strain ATCC 15692 / DSM 22644 / CIP 104116 / JCM 14847 / LMG 12228 / 1C / PRS 101 / PAO1)</name>
    <dbReference type="NCBI Taxonomy" id="208964"/>
    <lineage>
        <taxon>Bacteria</taxon>
        <taxon>Pseudomonadati</taxon>
        <taxon>Pseudomonadota</taxon>
        <taxon>Gammaproteobacteria</taxon>
        <taxon>Pseudomonadales</taxon>
        <taxon>Pseudomonadaceae</taxon>
        <taxon>Pseudomonas</taxon>
    </lineage>
</organism>
<reference key="1">
    <citation type="journal article" date="2000" name="Nature">
        <title>Complete genome sequence of Pseudomonas aeruginosa PAO1, an opportunistic pathogen.</title>
        <authorList>
            <person name="Stover C.K."/>
            <person name="Pham X.-Q.T."/>
            <person name="Erwin A.L."/>
            <person name="Mizoguchi S.D."/>
            <person name="Warrener P."/>
            <person name="Hickey M.J."/>
            <person name="Brinkman F.S.L."/>
            <person name="Hufnagle W.O."/>
            <person name="Kowalik D.J."/>
            <person name="Lagrou M."/>
            <person name="Garber R.L."/>
            <person name="Goltry L."/>
            <person name="Tolentino E."/>
            <person name="Westbrock-Wadman S."/>
            <person name="Yuan Y."/>
            <person name="Brody L.L."/>
            <person name="Coulter S.N."/>
            <person name="Folger K.R."/>
            <person name="Kas A."/>
            <person name="Larbig K."/>
            <person name="Lim R.M."/>
            <person name="Smith K.A."/>
            <person name="Spencer D.H."/>
            <person name="Wong G.K.-S."/>
            <person name="Wu Z."/>
            <person name="Paulsen I.T."/>
            <person name="Reizer J."/>
            <person name="Saier M.H. Jr."/>
            <person name="Hancock R.E.W."/>
            <person name="Lory S."/>
            <person name="Olson M.V."/>
        </authorList>
    </citation>
    <scope>NUCLEOTIDE SEQUENCE [LARGE SCALE GENOMIC DNA]</scope>
    <source>
        <strain>ATCC 15692 / DSM 22644 / CIP 104116 / JCM 14847 / LMG 12228 / 1C / PRS 101 / PAO1</strain>
    </source>
</reference>
<protein>
    <recommendedName>
        <fullName evidence="1">HTH-type transcriptional regulator ArgP</fullName>
    </recommendedName>
</protein>
<evidence type="ECO:0000255" key="1">
    <source>
        <dbReference type="HAMAP-Rule" id="MF_00513"/>
    </source>
</evidence>
<evidence type="ECO:0000305" key="2"/>
<accession>Q9HW38</accession>
<sequence length="300" mass="32451">MILFDYKLLAALAAVVEQGGFERAAQALGLSQSAVSQRIKLLEARVGQPVLVRETPPHPTDLGRRLLNHVQQVRLLEGDLQRWVPNLDEGGAPERLRIALNADSLATWWAAAVGDFCAERRVLLDLVVEDQEVGLKRMRAGEVAGCVCGSARPVAGARSLLLGAMRYRGLASPDFIARHFPRGVEAAALAGVPAIVFGPDDLLQHRFLKDLGVEGGFIHHLCPSSEGFVRLTAGGLGWGLVPERQVQGELARGELVELLPGQVIDVPLYWHYWRNGGELLASLTEHLLARAGDGLVRVSG</sequence>
<keyword id="KW-0238">DNA-binding</keyword>
<keyword id="KW-1185">Reference proteome</keyword>
<keyword id="KW-0804">Transcription</keyword>
<keyword id="KW-0805">Transcription regulation</keyword>
<feature type="chain" id="PRO_0000105645" description="HTH-type transcriptional regulator ArgP">
    <location>
        <begin position="1"/>
        <end position="300"/>
    </location>
</feature>
<feature type="domain" description="HTH lysR-type" evidence="1">
    <location>
        <begin position="4"/>
        <end position="60"/>
    </location>
</feature>
<feature type="DNA-binding region" description="H-T-H motif" evidence="1">
    <location>
        <begin position="21"/>
        <end position="40"/>
    </location>
</feature>